<keyword id="KW-0963">Cytoplasm</keyword>
<keyword id="KW-1185">Reference proteome</keyword>
<gene>
    <name type="ordered locus">SERP0911</name>
</gene>
<dbReference type="EMBL" id="CP000029">
    <property type="protein sequence ID" value="AAW54278.1"/>
    <property type="molecule type" value="Genomic_DNA"/>
</dbReference>
<dbReference type="RefSeq" id="WP_001831015.1">
    <property type="nucleotide sequence ID" value="NC_002976.3"/>
</dbReference>
<dbReference type="SMR" id="Q5HPK0"/>
<dbReference type="STRING" id="176279.SERP0911"/>
<dbReference type="KEGG" id="ser:SERP0911"/>
<dbReference type="eggNOG" id="COG4224">
    <property type="taxonomic scope" value="Bacteria"/>
</dbReference>
<dbReference type="HOGENOM" id="CLU_173137_0_2_9"/>
<dbReference type="Proteomes" id="UP000000531">
    <property type="component" value="Chromosome"/>
</dbReference>
<dbReference type="GO" id="GO:0005737">
    <property type="term" value="C:cytoplasm"/>
    <property type="evidence" value="ECO:0007669"/>
    <property type="project" value="UniProtKB-SubCell"/>
</dbReference>
<dbReference type="Gene3D" id="1.10.287.540">
    <property type="entry name" value="Helix hairpin bin"/>
    <property type="match status" value="1"/>
</dbReference>
<dbReference type="HAMAP" id="MF_01103">
    <property type="entry name" value="UPF0291"/>
    <property type="match status" value="1"/>
</dbReference>
<dbReference type="InterPro" id="IPR009242">
    <property type="entry name" value="DUF896"/>
</dbReference>
<dbReference type="PANTHER" id="PTHR37300">
    <property type="entry name" value="UPF0291 PROTEIN CBO2609/CLC_2481"/>
    <property type="match status" value="1"/>
</dbReference>
<dbReference type="PANTHER" id="PTHR37300:SF1">
    <property type="entry name" value="UPF0291 PROTEIN YNZC"/>
    <property type="match status" value="1"/>
</dbReference>
<dbReference type="Pfam" id="PF05979">
    <property type="entry name" value="DUF896"/>
    <property type="match status" value="1"/>
</dbReference>
<dbReference type="SUPFAM" id="SSF158221">
    <property type="entry name" value="YnzC-like"/>
    <property type="match status" value="1"/>
</dbReference>
<comment type="subcellular location">
    <subcellularLocation>
        <location evidence="1">Cytoplasm</location>
    </subcellularLocation>
</comment>
<comment type="similarity">
    <text evidence="1">Belongs to the UPF0291 family.</text>
</comment>
<accession>Q5HPK0</accession>
<protein>
    <recommendedName>
        <fullName evidence="1">UPF0291 protein SERP0911</fullName>
    </recommendedName>
</protein>
<reference key="1">
    <citation type="journal article" date="2005" name="J. Bacteriol.">
        <title>Insights on evolution of virulence and resistance from the complete genome analysis of an early methicillin-resistant Staphylococcus aureus strain and a biofilm-producing methicillin-resistant Staphylococcus epidermidis strain.</title>
        <authorList>
            <person name="Gill S.R."/>
            <person name="Fouts D.E."/>
            <person name="Archer G.L."/>
            <person name="Mongodin E.F."/>
            <person name="DeBoy R.T."/>
            <person name="Ravel J."/>
            <person name="Paulsen I.T."/>
            <person name="Kolonay J.F."/>
            <person name="Brinkac L.M."/>
            <person name="Beanan M.J."/>
            <person name="Dodson R.J."/>
            <person name="Daugherty S.C."/>
            <person name="Madupu R."/>
            <person name="Angiuoli S.V."/>
            <person name="Durkin A.S."/>
            <person name="Haft D.H."/>
            <person name="Vamathevan J.J."/>
            <person name="Khouri H."/>
            <person name="Utterback T.R."/>
            <person name="Lee C."/>
            <person name="Dimitrov G."/>
            <person name="Jiang L."/>
            <person name="Qin H."/>
            <person name="Weidman J."/>
            <person name="Tran K."/>
            <person name="Kang K.H."/>
            <person name="Hance I.R."/>
            <person name="Nelson K.E."/>
            <person name="Fraser C.M."/>
        </authorList>
    </citation>
    <scope>NUCLEOTIDE SEQUENCE [LARGE SCALE GENOMIC DNA]</scope>
    <source>
        <strain>ATCC 35984 / DSM 28319 / BCRC 17069 / CCUG 31568 / BM 3577 / RP62A</strain>
    </source>
</reference>
<organism>
    <name type="scientific">Staphylococcus epidermidis (strain ATCC 35984 / DSM 28319 / BCRC 17069 / CCUG 31568 / BM 3577 / RP62A)</name>
    <dbReference type="NCBI Taxonomy" id="176279"/>
    <lineage>
        <taxon>Bacteria</taxon>
        <taxon>Bacillati</taxon>
        <taxon>Bacillota</taxon>
        <taxon>Bacilli</taxon>
        <taxon>Bacillales</taxon>
        <taxon>Staphylococcaceae</taxon>
        <taxon>Staphylococcus</taxon>
    </lineage>
</organism>
<feature type="chain" id="PRO_0000094996" description="UPF0291 protein SERP0911">
    <location>
        <begin position="1"/>
        <end position="78"/>
    </location>
</feature>
<feature type="region of interest" description="Disordered" evidence="2">
    <location>
        <begin position="53"/>
        <end position="78"/>
    </location>
</feature>
<feature type="compositionally biased region" description="Basic and acidic residues" evidence="2">
    <location>
        <begin position="64"/>
        <end position="78"/>
    </location>
</feature>
<name>Y911_STAEQ</name>
<proteinExistence type="inferred from homology"/>
<evidence type="ECO:0000255" key="1">
    <source>
        <dbReference type="HAMAP-Rule" id="MF_01103"/>
    </source>
</evidence>
<evidence type="ECO:0000256" key="2">
    <source>
        <dbReference type="SAM" id="MobiDB-lite"/>
    </source>
</evidence>
<sequence length="78" mass="9362">MSKENLNIDRINELARKKKEHGLTNEEAKEQTKLRRQYLEEFRKGFKQQIENTKVIDPEGNDVTPEKLKKIQEEKHNK</sequence>